<protein>
    <recommendedName>
        <fullName evidence="1">Phosphopantetheine adenylyltransferase</fullName>
        <ecNumber evidence="1">2.7.7.3</ecNumber>
    </recommendedName>
    <alternativeName>
        <fullName evidence="1">Dephospho-CoA pyrophosphorylase</fullName>
    </alternativeName>
    <alternativeName>
        <fullName evidence="1">Pantetheine-phosphate adenylyltransferase</fullName>
        <shortName evidence="1">PPAT</shortName>
    </alternativeName>
</protein>
<gene>
    <name evidence="1" type="primary">coaD</name>
    <name type="ordered locus">BMA10229_A1497</name>
</gene>
<name>COAD_BURM9</name>
<feature type="chain" id="PRO_1000011107" description="Phosphopantetheine adenylyltransferase">
    <location>
        <begin position="1"/>
        <end position="166"/>
    </location>
</feature>
<feature type="binding site" evidence="1">
    <location>
        <begin position="9"/>
        <end position="10"/>
    </location>
    <ligand>
        <name>ATP</name>
        <dbReference type="ChEBI" id="CHEBI:30616"/>
    </ligand>
</feature>
<feature type="binding site" evidence="1">
    <location>
        <position position="9"/>
    </location>
    <ligand>
        <name>substrate</name>
    </ligand>
</feature>
<feature type="binding site" evidence="1">
    <location>
        <position position="17"/>
    </location>
    <ligand>
        <name>ATP</name>
        <dbReference type="ChEBI" id="CHEBI:30616"/>
    </ligand>
</feature>
<feature type="binding site" evidence="1">
    <location>
        <position position="41"/>
    </location>
    <ligand>
        <name>substrate</name>
    </ligand>
</feature>
<feature type="binding site" evidence="1">
    <location>
        <position position="73"/>
    </location>
    <ligand>
        <name>substrate</name>
    </ligand>
</feature>
<feature type="binding site" evidence="1">
    <location>
        <position position="87"/>
    </location>
    <ligand>
        <name>substrate</name>
    </ligand>
</feature>
<feature type="binding site" evidence="1">
    <location>
        <begin position="88"/>
        <end position="90"/>
    </location>
    <ligand>
        <name>ATP</name>
        <dbReference type="ChEBI" id="CHEBI:30616"/>
    </ligand>
</feature>
<feature type="binding site" evidence="1">
    <location>
        <position position="98"/>
    </location>
    <ligand>
        <name>ATP</name>
        <dbReference type="ChEBI" id="CHEBI:30616"/>
    </ligand>
</feature>
<feature type="binding site" evidence="1">
    <location>
        <begin position="123"/>
        <end position="129"/>
    </location>
    <ligand>
        <name>ATP</name>
        <dbReference type="ChEBI" id="CHEBI:30616"/>
    </ligand>
</feature>
<feature type="site" description="Transition state stabilizer" evidence="1">
    <location>
        <position position="17"/>
    </location>
</feature>
<dbReference type="EC" id="2.7.7.3" evidence="1"/>
<dbReference type="EMBL" id="CP000546">
    <property type="protein sequence ID" value="ABN02847.1"/>
    <property type="molecule type" value="Genomic_DNA"/>
</dbReference>
<dbReference type="RefSeq" id="WP_004195249.1">
    <property type="nucleotide sequence ID" value="NC_008836.1"/>
</dbReference>
<dbReference type="SMR" id="A2S6B1"/>
<dbReference type="GeneID" id="93059037"/>
<dbReference type="KEGG" id="bml:BMA10229_A1497"/>
<dbReference type="HOGENOM" id="CLU_100149_0_1_4"/>
<dbReference type="UniPathway" id="UPA00241">
    <property type="reaction ID" value="UER00355"/>
</dbReference>
<dbReference type="Proteomes" id="UP000002283">
    <property type="component" value="Chromosome I"/>
</dbReference>
<dbReference type="GO" id="GO:0005737">
    <property type="term" value="C:cytoplasm"/>
    <property type="evidence" value="ECO:0007669"/>
    <property type="project" value="UniProtKB-SubCell"/>
</dbReference>
<dbReference type="GO" id="GO:0005524">
    <property type="term" value="F:ATP binding"/>
    <property type="evidence" value="ECO:0007669"/>
    <property type="project" value="UniProtKB-KW"/>
</dbReference>
<dbReference type="GO" id="GO:0004595">
    <property type="term" value="F:pantetheine-phosphate adenylyltransferase activity"/>
    <property type="evidence" value="ECO:0007669"/>
    <property type="project" value="UniProtKB-UniRule"/>
</dbReference>
<dbReference type="GO" id="GO:0015937">
    <property type="term" value="P:coenzyme A biosynthetic process"/>
    <property type="evidence" value="ECO:0007669"/>
    <property type="project" value="UniProtKB-UniRule"/>
</dbReference>
<dbReference type="CDD" id="cd02163">
    <property type="entry name" value="PPAT"/>
    <property type="match status" value="1"/>
</dbReference>
<dbReference type="Gene3D" id="3.40.50.620">
    <property type="entry name" value="HUPs"/>
    <property type="match status" value="1"/>
</dbReference>
<dbReference type="HAMAP" id="MF_00151">
    <property type="entry name" value="PPAT_bact"/>
    <property type="match status" value="1"/>
</dbReference>
<dbReference type="InterPro" id="IPR004821">
    <property type="entry name" value="Cyt_trans-like"/>
</dbReference>
<dbReference type="InterPro" id="IPR001980">
    <property type="entry name" value="PPAT"/>
</dbReference>
<dbReference type="InterPro" id="IPR014729">
    <property type="entry name" value="Rossmann-like_a/b/a_fold"/>
</dbReference>
<dbReference type="NCBIfam" id="TIGR01510">
    <property type="entry name" value="coaD_prev_kdtB"/>
    <property type="match status" value="1"/>
</dbReference>
<dbReference type="NCBIfam" id="TIGR00125">
    <property type="entry name" value="cyt_tran_rel"/>
    <property type="match status" value="1"/>
</dbReference>
<dbReference type="PANTHER" id="PTHR21342">
    <property type="entry name" value="PHOSPHOPANTETHEINE ADENYLYLTRANSFERASE"/>
    <property type="match status" value="1"/>
</dbReference>
<dbReference type="PANTHER" id="PTHR21342:SF1">
    <property type="entry name" value="PHOSPHOPANTETHEINE ADENYLYLTRANSFERASE"/>
    <property type="match status" value="1"/>
</dbReference>
<dbReference type="Pfam" id="PF01467">
    <property type="entry name" value="CTP_transf_like"/>
    <property type="match status" value="1"/>
</dbReference>
<dbReference type="PRINTS" id="PR01020">
    <property type="entry name" value="LPSBIOSNTHSS"/>
</dbReference>
<dbReference type="SUPFAM" id="SSF52374">
    <property type="entry name" value="Nucleotidylyl transferase"/>
    <property type="match status" value="1"/>
</dbReference>
<reference key="1">
    <citation type="journal article" date="2010" name="Genome Biol. Evol.">
        <title>Continuing evolution of Burkholderia mallei through genome reduction and large-scale rearrangements.</title>
        <authorList>
            <person name="Losada L."/>
            <person name="Ronning C.M."/>
            <person name="DeShazer D."/>
            <person name="Woods D."/>
            <person name="Fedorova N."/>
            <person name="Kim H.S."/>
            <person name="Shabalina S.A."/>
            <person name="Pearson T.R."/>
            <person name="Brinkac L."/>
            <person name="Tan P."/>
            <person name="Nandi T."/>
            <person name="Crabtree J."/>
            <person name="Badger J."/>
            <person name="Beckstrom-Sternberg S."/>
            <person name="Saqib M."/>
            <person name="Schutzer S.E."/>
            <person name="Keim P."/>
            <person name="Nierman W.C."/>
        </authorList>
    </citation>
    <scope>NUCLEOTIDE SEQUENCE [LARGE SCALE GENOMIC DNA]</scope>
    <source>
        <strain>NCTC 10229</strain>
    </source>
</reference>
<keyword id="KW-0067">ATP-binding</keyword>
<keyword id="KW-0173">Coenzyme A biosynthesis</keyword>
<keyword id="KW-0963">Cytoplasm</keyword>
<keyword id="KW-0460">Magnesium</keyword>
<keyword id="KW-0547">Nucleotide-binding</keyword>
<keyword id="KW-0548">Nucleotidyltransferase</keyword>
<keyword id="KW-0808">Transferase</keyword>
<organism>
    <name type="scientific">Burkholderia mallei (strain NCTC 10229)</name>
    <dbReference type="NCBI Taxonomy" id="412022"/>
    <lineage>
        <taxon>Bacteria</taxon>
        <taxon>Pseudomonadati</taxon>
        <taxon>Pseudomonadota</taxon>
        <taxon>Betaproteobacteria</taxon>
        <taxon>Burkholderiales</taxon>
        <taxon>Burkholderiaceae</taxon>
        <taxon>Burkholderia</taxon>
        <taxon>pseudomallei group</taxon>
    </lineage>
</organism>
<comment type="function">
    <text evidence="1">Reversibly transfers an adenylyl group from ATP to 4'-phosphopantetheine, yielding dephospho-CoA (dPCoA) and pyrophosphate.</text>
</comment>
<comment type="catalytic activity">
    <reaction evidence="1">
        <text>(R)-4'-phosphopantetheine + ATP + H(+) = 3'-dephospho-CoA + diphosphate</text>
        <dbReference type="Rhea" id="RHEA:19801"/>
        <dbReference type="ChEBI" id="CHEBI:15378"/>
        <dbReference type="ChEBI" id="CHEBI:30616"/>
        <dbReference type="ChEBI" id="CHEBI:33019"/>
        <dbReference type="ChEBI" id="CHEBI:57328"/>
        <dbReference type="ChEBI" id="CHEBI:61723"/>
        <dbReference type="EC" id="2.7.7.3"/>
    </reaction>
</comment>
<comment type="cofactor">
    <cofactor evidence="1">
        <name>Mg(2+)</name>
        <dbReference type="ChEBI" id="CHEBI:18420"/>
    </cofactor>
</comment>
<comment type="pathway">
    <text evidence="1">Cofactor biosynthesis; coenzyme A biosynthesis; CoA from (R)-pantothenate: step 4/5.</text>
</comment>
<comment type="subunit">
    <text evidence="1">Homohexamer.</text>
</comment>
<comment type="subcellular location">
    <subcellularLocation>
        <location evidence="1">Cytoplasm</location>
    </subcellularLocation>
</comment>
<comment type="similarity">
    <text evidence="1">Belongs to the bacterial CoaD family.</text>
</comment>
<sequence>MVVAVYPGTFDPLTRGHEDLVRRASSIFDTLVVGVADSRAKKPFFSLEERLKIANEVLGHYPNVKVMGFTGLLKDFVRANDARVIVRGLRAVSDFEYEFQMAGMNRYLLPDVETMFMTPSDQYQFISGTIVREIAQLGGDVSKFVFPSVEKWLTEKVAAMAQGPSA</sequence>
<evidence type="ECO:0000255" key="1">
    <source>
        <dbReference type="HAMAP-Rule" id="MF_00151"/>
    </source>
</evidence>
<proteinExistence type="inferred from homology"/>
<accession>A2S6B1</accession>